<accession>A2RNP2</accession>
<evidence type="ECO:0000255" key="1">
    <source>
        <dbReference type="HAMAP-Rule" id="MF_01364"/>
    </source>
</evidence>
<evidence type="ECO:0000305" key="2"/>
<gene>
    <name evidence="1" type="primary">rpsZ</name>
    <name evidence="1" type="synonym">rpsN</name>
    <name type="ordered locus">llmg_2370</name>
</gene>
<feature type="chain" id="PRO_1000067945" description="Small ribosomal subunit protein uS14">
    <location>
        <begin position="1"/>
        <end position="61"/>
    </location>
</feature>
<feature type="binding site" evidence="1">
    <location>
        <position position="24"/>
    </location>
    <ligand>
        <name>Zn(2+)</name>
        <dbReference type="ChEBI" id="CHEBI:29105"/>
    </ligand>
</feature>
<feature type="binding site" evidence="1">
    <location>
        <position position="27"/>
    </location>
    <ligand>
        <name>Zn(2+)</name>
        <dbReference type="ChEBI" id="CHEBI:29105"/>
    </ligand>
</feature>
<feature type="binding site" evidence="1">
    <location>
        <position position="40"/>
    </location>
    <ligand>
        <name>Zn(2+)</name>
        <dbReference type="ChEBI" id="CHEBI:29105"/>
    </ligand>
</feature>
<feature type="binding site" evidence="1">
    <location>
        <position position="43"/>
    </location>
    <ligand>
        <name>Zn(2+)</name>
        <dbReference type="ChEBI" id="CHEBI:29105"/>
    </ligand>
</feature>
<dbReference type="EMBL" id="AM406671">
    <property type="protein sequence ID" value="CAL98933.1"/>
    <property type="molecule type" value="Genomic_DNA"/>
</dbReference>
<dbReference type="RefSeq" id="WP_003129946.1">
    <property type="nucleotide sequence ID" value="NZ_WJVF01000005.1"/>
</dbReference>
<dbReference type="PDB" id="5MYJ">
    <property type="method" value="EM"/>
    <property type="resolution" value="5.60 A"/>
    <property type="chains" value="AN=1-61"/>
</dbReference>
<dbReference type="PDBsum" id="5MYJ"/>
<dbReference type="EMDB" id="EMD-3581"/>
<dbReference type="SMR" id="A2RNP2"/>
<dbReference type="STRING" id="416870.llmg_2370"/>
<dbReference type="KEGG" id="llm:llmg_2370"/>
<dbReference type="eggNOG" id="COG0199">
    <property type="taxonomic scope" value="Bacteria"/>
</dbReference>
<dbReference type="HOGENOM" id="CLU_139869_3_0_9"/>
<dbReference type="OrthoDB" id="9810484at2"/>
<dbReference type="PhylomeDB" id="A2RNP2"/>
<dbReference type="Proteomes" id="UP000000364">
    <property type="component" value="Chromosome"/>
</dbReference>
<dbReference type="GO" id="GO:0015935">
    <property type="term" value="C:small ribosomal subunit"/>
    <property type="evidence" value="ECO:0007669"/>
    <property type="project" value="TreeGrafter"/>
</dbReference>
<dbReference type="GO" id="GO:0019843">
    <property type="term" value="F:rRNA binding"/>
    <property type="evidence" value="ECO:0007669"/>
    <property type="project" value="UniProtKB-UniRule"/>
</dbReference>
<dbReference type="GO" id="GO:0003735">
    <property type="term" value="F:structural constituent of ribosome"/>
    <property type="evidence" value="ECO:0007669"/>
    <property type="project" value="InterPro"/>
</dbReference>
<dbReference type="GO" id="GO:0008270">
    <property type="term" value="F:zinc ion binding"/>
    <property type="evidence" value="ECO:0007669"/>
    <property type="project" value="UniProtKB-UniRule"/>
</dbReference>
<dbReference type="GO" id="GO:0006412">
    <property type="term" value="P:translation"/>
    <property type="evidence" value="ECO:0007669"/>
    <property type="project" value="UniProtKB-UniRule"/>
</dbReference>
<dbReference type="FunFam" id="4.10.830.10:FF:000001">
    <property type="entry name" value="30S ribosomal protein S14 type Z"/>
    <property type="match status" value="1"/>
</dbReference>
<dbReference type="Gene3D" id="4.10.830.10">
    <property type="entry name" value="30s Ribosomal Protein S14, Chain N"/>
    <property type="match status" value="1"/>
</dbReference>
<dbReference type="HAMAP" id="MF_01364_B">
    <property type="entry name" value="Ribosomal_uS14_2_B"/>
    <property type="match status" value="1"/>
</dbReference>
<dbReference type="InterPro" id="IPR001209">
    <property type="entry name" value="Ribosomal_uS14"/>
</dbReference>
<dbReference type="InterPro" id="IPR023053">
    <property type="entry name" value="Ribosomal_uS14_bact"/>
</dbReference>
<dbReference type="InterPro" id="IPR018271">
    <property type="entry name" value="Ribosomal_uS14_CS"/>
</dbReference>
<dbReference type="InterPro" id="IPR043140">
    <property type="entry name" value="Ribosomal_uS14_sf"/>
</dbReference>
<dbReference type="NCBIfam" id="NF005974">
    <property type="entry name" value="PRK08061.1"/>
    <property type="match status" value="1"/>
</dbReference>
<dbReference type="PANTHER" id="PTHR19836">
    <property type="entry name" value="30S RIBOSOMAL PROTEIN S14"/>
    <property type="match status" value="1"/>
</dbReference>
<dbReference type="PANTHER" id="PTHR19836:SF26">
    <property type="entry name" value="SMALL RIBOSOMAL SUBUNIT PROTEIN US14B"/>
    <property type="match status" value="1"/>
</dbReference>
<dbReference type="Pfam" id="PF00253">
    <property type="entry name" value="Ribosomal_S14"/>
    <property type="match status" value="1"/>
</dbReference>
<dbReference type="SUPFAM" id="SSF57716">
    <property type="entry name" value="Glucocorticoid receptor-like (DNA-binding domain)"/>
    <property type="match status" value="1"/>
</dbReference>
<dbReference type="PROSITE" id="PS00527">
    <property type="entry name" value="RIBOSOMAL_S14"/>
    <property type="match status" value="1"/>
</dbReference>
<name>RS14Z_LACLM</name>
<protein>
    <recommendedName>
        <fullName evidence="1">Small ribosomal subunit protein uS14</fullName>
    </recommendedName>
    <alternativeName>
        <fullName evidence="2">30S ribosomal protein S14 type Z</fullName>
    </alternativeName>
</protein>
<reference key="1">
    <citation type="journal article" date="2007" name="J. Bacteriol.">
        <title>The complete genome sequence of the lactic acid bacterial paradigm Lactococcus lactis subsp. cremoris MG1363.</title>
        <authorList>
            <person name="Wegmann U."/>
            <person name="O'Connell-Motherway M."/>
            <person name="Zomer A."/>
            <person name="Buist G."/>
            <person name="Shearman C."/>
            <person name="Canchaya C."/>
            <person name="Ventura M."/>
            <person name="Goesmann A."/>
            <person name="Gasson M.J."/>
            <person name="Kuipers O.P."/>
            <person name="van Sinderen D."/>
            <person name="Kok J."/>
        </authorList>
    </citation>
    <scope>NUCLEOTIDE SEQUENCE [LARGE SCALE GENOMIC DNA]</scope>
    <source>
        <strain>MG1363</strain>
    </source>
</reference>
<sequence length="61" mass="7135">MAKKSMVVKNQRPAKFSTQAYTRCERCGRPHSVYRKFKLCRICLRELAYKGQLPGVKKASW</sequence>
<comment type="function">
    <text evidence="1">Binds 16S rRNA, required for the assembly of 30S particles and may also be responsible for determining the conformation of the 16S rRNA at the A site.</text>
</comment>
<comment type="cofactor">
    <cofactor evidence="1">
        <name>Zn(2+)</name>
        <dbReference type="ChEBI" id="CHEBI:29105"/>
    </cofactor>
    <text evidence="1">Binds 1 zinc ion per subunit.</text>
</comment>
<comment type="subunit">
    <text evidence="1">Part of the 30S ribosomal subunit. Contacts proteins S3 and S10.</text>
</comment>
<comment type="similarity">
    <text evidence="1">Belongs to the universal ribosomal protein uS14 family. Zinc-binding uS14 subfamily.</text>
</comment>
<keyword id="KW-0002">3D-structure</keyword>
<keyword id="KW-0479">Metal-binding</keyword>
<keyword id="KW-0687">Ribonucleoprotein</keyword>
<keyword id="KW-0689">Ribosomal protein</keyword>
<keyword id="KW-0694">RNA-binding</keyword>
<keyword id="KW-0699">rRNA-binding</keyword>
<keyword id="KW-0862">Zinc</keyword>
<organism>
    <name type="scientific">Lactococcus lactis subsp. cremoris (strain MG1363)</name>
    <dbReference type="NCBI Taxonomy" id="416870"/>
    <lineage>
        <taxon>Bacteria</taxon>
        <taxon>Bacillati</taxon>
        <taxon>Bacillota</taxon>
        <taxon>Bacilli</taxon>
        <taxon>Lactobacillales</taxon>
        <taxon>Streptococcaceae</taxon>
        <taxon>Lactococcus</taxon>
        <taxon>Lactococcus cremoris subsp. cremoris</taxon>
    </lineage>
</organism>
<proteinExistence type="evidence at protein level"/>